<organism>
    <name type="scientific">Bordetella avium (strain 197N)</name>
    <dbReference type="NCBI Taxonomy" id="360910"/>
    <lineage>
        <taxon>Bacteria</taxon>
        <taxon>Pseudomonadati</taxon>
        <taxon>Pseudomonadota</taxon>
        <taxon>Betaproteobacteria</taxon>
        <taxon>Burkholderiales</taxon>
        <taxon>Alcaligenaceae</taxon>
        <taxon>Bordetella</taxon>
    </lineage>
</organism>
<name>RL2_BORA1</name>
<keyword id="KW-1185">Reference proteome</keyword>
<keyword id="KW-0687">Ribonucleoprotein</keyword>
<keyword id="KW-0689">Ribosomal protein</keyword>
<keyword id="KW-0694">RNA-binding</keyword>
<keyword id="KW-0699">rRNA-binding</keyword>
<gene>
    <name evidence="1" type="primary">rplB</name>
    <name type="ordered locus">BAV0028</name>
</gene>
<reference key="1">
    <citation type="journal article" date="2006" name="J. Bacteriol.">
        <title>Comparison of the genome sequence of the poultry pathogen Bordetella avium with those of B. bronchiseptica, B. pertussis, and B. parapertussis reveals extensive diversity in surface structures associated with host interaction.</title>
        <authorList>
            <person name="Sebaihia M."/>
            <person name="Preston A."/>
            <person name="Maskell D.J."/>
            <person name="Kuzmiak H."/>
            <person name="Connell T.D."/>
            <person name="King N.D."/>
            <person name="Orndorff P.E."/>
            <person name="Miyamoto D.M."/>
            <person name="Thomson N.R."/>
            <person name="Harris D."/>
            <person name="Goble A."/>
            <person name="Lord A."/>
            <person name="Murphy L."/>
            <person name="Quail M.A."/>
            <person name="Rutter S."/>
            <person name="Squares R."/>
            <person name="Squares S."/>
            <person name="Woodward J."/>
            <person name="Parkhill J."/>
            <person name="Temple L.M."/>
        </authorList>
    </citation>
    <scope>NUCLEOTIDE SEQUENCE [LARGE SCALE GENOMIC DNA]</scope>
    <source>
        <strain>197N</strain>
    </source>
</reference>
<sequence>MALVKVKPTSAGRRGMVKVVSPNLHKGAPHAALLEKKIRGSGRNNNGHITIRHRGGGHKQHYRVVDFRRNKDGIPAKVERLEYDPNRTAHIALLCYADGERRYIIAPRGLEVGATLISGIEAPIRAGNTLPIRNIPVGTTIHCIEMIPGKGAQMARSAGASAVLMAREGTYAQVRLRSGEVRRVHIECRATIGEVGNEEHSLRQIGKAGAMRWRGIRPTVRGVAMNPIDHPHGGGEGRTGEAREPVSPWGTPSKGYKTRRNKRTNNMIVQRRKRK</sequence>
<protein>
    <recommendedName>
        <fullName evidence="1">Large ribosomal subunit protein uL2</fullName>
    </recommendedName>
    <alternativeName>
        <fullName evidence="3">50S ribosomal protein L2</fullName>
    </alternativeName>
</protein>
<evidence type="ECO:0000255" key="1">
    <source>
        <dbReference type="HAMAP-Rule" id="MF_01320"/>
    </source>
</evidence>
<evidence type="ECO:0000256" key="2">
    <source>
        <dbReference type="SAM" id="MobiDB-lite"/>
    </source>
</evidence>
<evidence type="ECO:0000305" key="3"/>
<comment type="function">
    <text evidence="1">One of the primary rRNA binding proteins. Required for association of the 30S and 50S subunits to form the 70S ribosome, for tRNA binding and peptide bond formation. It has been suggested to have peptidyltransferase activity; this is somewhat controversial. Makes several contacts with the 16S rRNA in the 70S ribosome.</text>
</comment>
<comment type="subunit">
    <text evidence="1">Part of the 50S ribosomal subunit. Forms a bridge to the 30S subunit in the 70S ribosome.</text>
</comment>
<comment type="similarity">
    <text evidence="1">Belongs to the universal ribosomal protein uL2 family.</text>
</comment>
<dbReference type="EMBL" id="AM167904">
    <property type="protein sequence ID" value="CAJ47612.1"/>
    <property type="molecule type" value="Genomic_DNA"/>
</dbReference>
<dbReference type="RefSeq" id="WP_012415736.1">
    <property type="nucleotide sequence ID" value="NC_010645.1"/>
</dbReference>
<dbReference type="SMR" id="Q2L2F1"/>
<dbReference type="STRING" id="360910.BAV0028"/>
<dbReference type="GeneID" id="92936727"/>
<dbReference type="KEGG" id="bav:BAV0028"/>
<dbReference type="eggNOG" id="COG0090">
    <property type="taxonomic scope" value="Bacteria"/>
</dbReference>
<dbReference type="HOGENOM" id="CLU_036235_2_1_4"/>
<dbReference type="OrthoDB" id="9778722at2"/>
<dbReference type="Proteomes" id="UP000001977">
    <property type="component" value="Chromosome"/>
</dbReference>
<dbReference type="GO" id="GO:0015934">
    <property type="term" value="C:large ribosomal subunit"/>
    <property type="evidence" value="ECO:0007669"/>
    <property type="project" value="InterPro"/>
</dbReference>
<dbReference type="GO" id="GO:0019843">
    <property type="term" value="F:rRNA binding"/>
    <property type="evidence" value="ECO:0007669"/>
    <property type="project" value="UniProtKB-UniRule"/>
</dbReference>
<dbReference type="GO" id="GO:0003735">
    <property type="term" value="F:structural constituent of ribosome"/>
    <property type="evidence" value="ECO:0007669"/>
    <property type="project" value="InterPro"/>
</dbReference>
<dbReference type="GO" id="GO:0016740">
    <property type="term" value="F:transferase activity"/>
    <property type="evidence" value="ECO:0007669"/>
    <property type="project" value="InterPro"/>
</dbReference>
<dbReference type="GO" id="GO:0002181">
    <property type="term" value="P:cytoplasmic translation"/>
    <property type="evidence" value="ECO:0007669"/>
    <property type="project" value="TreeGrafter"/>
</dbReference>
<dbReference type="FunFam" id="2.30.30.30:FF:000001">
    <property type="entry name" value="50S ribosomal protein L2"/>
    <property type="match status" value="1"/>
</dbReference>
<dbReference type="FunFam" id="2.40.50.140:FF:000003">
    <property type="entry name" value="50S ribosomal protein L2"/>
    <property type="match status" value="1"/>
</dbReference>
<dbReference type="FunFam" id="4.10.950.10:FF:000001">
    <property type="entry name" value="50S ribosomal protein L2"/>
    <property type="match status" value="1"/>
</dbReference>
<dbReference type="Gene3D" id="2.30.30.30">
    <property type="match status" value="1"/>
</dbReference>
<dbReference type="Gene3D" id="2.40.50.140">
    <property type="entry name" value="Nucleic acid-binding proteins"/>
    <property type="match status" value="1"/>
</dbReference>
<dbReference type="Gene3D" id="4.10.950.10">
    <property type="entry name" value="Ribosomal protein L2, domain 3"/>
    <property type="match status" value="1"/>
</dbReference>
<dbReference type="HAMAP" id="MF_01320_B">
    <property type="entry name" value="Ribosomal_uL2_B"/>
    <property type="match status" value="1"/>
</dbReference>
<dbReference type="InterPro" id="IPR012340">
    <property type="entry name" value="NA-bd_OB-fold"/>
</dbReference>
<dbReference type="InterPro" id="IPR014722">
    <property type="entry name" value="Rib_uL2_dom2"/>
</dbReference>
<dbReference type="InterPro" id="IPR002171">
    <property type="entry name" value="Ribosomal_uL2"/>
</dbReference>
<dbReference type="InterPro" id="IPR005880">
    <property type="entry name" value="Ribosomal_uL2_bac/org-type"/>
</dbReference>
<dbReference type="InterPro" id="IPR022669">
    <property type="entry name" value="Ribosomal_uL2_C"/>
</dbReference>
<dbReference type="InterPro" id="IPR022671">
    <property type="entry name" value="Ribosomal_uL2_CS"/>
</dbReference>
<dbReference type="InterPro" id="IPR014726">
    <property type="entry name" value="Ribosomal_uL2_dom3"/>
</dbReference>
<dbReference type="InterPro" id="IPR022666">
    <property type="entry name" value="Ribosomal_uL2_RNA-bd_dom"/>
</dbReference>
<dbReference type="InterPro" id="IPR008991">
    <property type="entry name" value="Translation_prot_SH3-like_sf"/>
</dbReference>
<dbReference type="NCBIfam" id="TIGR01171">
    <property type="entry name" value="rplB_bact"/>
    <property type="match status" value="1"/>
</dbReference>
<dbReference type="PANTHER" id="PTHR13691:SF5">
    <property type="entry name" value="LARGE RIBOSOMAL SUBUNIT PROTEIN UL2M"/>
    <property type="match status" value="1"/>
</dbReference>
<dbReference type="PANTHER" id="PTHR13691">
    <property type="entry name" value="RIBOSOMAL PROTEIN L2"/>
    <property type="match status" value="1"/>
</dbReference>
<dbReference type="Pfam" id="PF00181">
    <property type="entry name" value="Ribosomal_L2"/>
    <property type="match status" value="1"/>
</dbReference>
<dbReference type="Pfam" id="PF03947">
    <property type="entry name" value="Ribosomal_L2_C"/>
    <property type="match status" value="1"/>
</dbReference>
<dbReference type="PIRSF" id="PIRSF002158">
    <property type="entry name" value="Ribosomal_L2"/>
    <property type="match status" value="1"/>
</dbReference>
<dbReference type="SMART" id="SM01383">
    <property type="entry name" value="Ribosomal_L2"/>
    <property type="match status" value="1"/>
</dbReference>
<dbReference type="SMART" id="SM01382">
    <property type="entry name" value="Ribosomal_L2_C"/>
    <property type="match status" value="1"/>
</dbReference>
<dbReference type="SUPFAM" id="SSF50249">
    <property type="entry name" value="Nucleic acid-binding proteins"/>
    <property type="match status" value="1"/>
</dbReference>
<dbReference type="SUPFAM" id="SSF50104">
    <property type="entry name" value="Translation proteins SH3-like domain"/>
    <property type="match status" value="1"/>
</dbReference>
<dbReference type="PROSITE" id="PS00467">
    <property type="entry name" value="RIBOSOMAL_L2"/>
    <property type="match status" value="1"/>
</dbReference>
<accession>Q2L2F1</accession>
<proteinExistence type="inferred from homology"/>
<feature type="chain" id="PRO_0000237160" description="Large ribosomal subunit protein uL2">
    <location>
        <begin position="1"/>
        <end position="275"/>
    </location>
</feature>
<feature type="region of interest" description="Disordered" evidence="2">
    <location>
        <begin position="223"/>
        <end position="275"/>
    </location>
</feature>
<feature type="compositionally biased region" description="Basic and acidic residues" evidence="2">
    <location>
        <begin position="229"/>
        <end position="244"/>
    </location>
</feature>